<comment type="function">
    <text evidence="1">Catalyzes the attachment of glutamate to tRNA(Glu) in a two-step reaction: glutamate is first activated by ATP to form Glu-AMP and then transferred to the acceptor end of tRNA(Glu).</text>
</comment>
<comment type="catalytic activity">
    <reaction evidence="1">
        <text>tRNA(Glu) + L-glutamate + ATP = L-glutamyl-tRNA(Glu) + AMP + diphosphate</text>
        <dbReference type="Rhea" id="RHEA:23540"/>
        <dbReference type="Rhea" id="RHEA-COMP:9663"/>
        <dbReference type="Rhea" id="RHEA-COMP:9680"/>
        <dbReference type="ChEBI" id="CHEBI:29985"/>
        <dbReference type="ChEBI" id="CHEBI:30616"/>
        <dbReference type="ChEBI" id="CHEBI:33019"/>
        <dbReference type="ChEBI" id="CHEBI:78442"/>
        <dbReference type="ChEBI" id="CHEBI:78520"/>
        <dbReference type="ChEBI" id="CHEBI:456215"/>
        <dbReference type="EC" id="6.1.1.17"/>
    </reaction>
</comment>
<comment type="subunit">
    <text evidence="1">Monomer.</text>
</comment>
<comment type="subcellular location">
    <subcellularLocation>
        <location evidence="1">Cytoplasm</location>
    </subcellularLocation>
</comment>
<comment type="similarity">
    <text evidence="1">Belongs to the class-I aminoacyl-tRNA synthetase family. Glutamate--tRNA ligase type 1 subfamily.</text>
</comment>
<organism>
    <name type="scientific">Staphylococcus aureus (strain bovine RF122 / ET3-1)</name>
    <dbReference type="NCBI Taxonomy" id="273036"/>
    <lineage>
        <taxon>Bacteria</taxon>
        <taxon>Bacillati</taxon>
        <taxon>Bacillota</taxon>
        <taxon>Bacilli</taxon>
        <taxon>Bacillales</taxon>
        <taxon>Staphylococcaceae</taxon>
        <taxon>Staphylococcus</taxon>
    </lineage>
</organism>
<reference key="1">
    <citation type="journal article" date="2007" name="PLoS ONE">
        <title>Molecular correlates of host specialization in Staphylococcus aureus.</title>
        <authorList>
            <person name="Herron-Olson L."/>
            <person name="Fitzgerald J.R."/>
            <person name="Musser J.M."/>
            <person name="Kapur V."/>
        </authorList>
    </citation>
    <scope>NUCLEOTIDE SEQUENCE [LARGE SCALE GENOMIC DNA]</scope>
    <source>
        <strain>bovine RF122 / ET3-1</strain>
    </source>
</reference>
<sequence length="484" mass="56346">MSDRIRVRYAPSPTGYLHIGNARTALFNYLYAKHYNGDFVIRIEDTDKKRNLEDGETSQFDNLKWLGLDWDESVDKDNGYGPYRQSERQHIYQPLIDQLLAEDKAYKCYMTEEELEVEREAQIARGEMPRYGGQHAHLTEEQRQQFEAEGRQPSIRFRVPQNQTYSFDDMVKGNISFDSNGIGDWVIVKKDGIPTYNFAVAIDDHYMEISDVIRGDDHISNTPKQIMIYEAFGWEPPRFGHMSLIVNEERKKLSKRDGQILQFIEQYRDLGYLPEALFNFIALLGWSPEGEEEIFSKEEFIKIFDEKRLSKSPAFFDKQKLAWVNNQYMKQKDTETVFQLALPHLIKANLIPEVPSEEDLSWGRKLIALYQKEMSYAGEIVPLSEMFFKEMPALGEEEQQVINGEQVPELMTHLFSKLEALEPFEVAEIKKTIKEVQKETGIKGKQLFMPIRVAVTGQMHGPELPNTIEVLGKEKVLNRLKQYK</sequence>
<accession>Q2YSD3</accession>
<keyword id="KW-0030">Aminoacyl-tRNA synthetase</keyword>
<keyword id="KW-0067">ATP-binding</keyword>
<keyword id="KW-0963">Cytoplasm</keyword>
<keyword id="KW-0436">Ligase</keyword>
<keyword id="KW-0547">Nucleotide-binding</keyword>
<keyword id="KW-0648">Protein biosynthesis</keyword>
<protein>
    <recommendedName>
        <fullName evidence="1">Glutamate--tRNA ligase</fullName>
        <ecNumber evidence="1">6.1.1.17</ecNumber>
    </recommendedName>
    <alternativeName>
        <fullName evidence="1">Glutamyl-tRNA synthetase</fullName>
        <shortName evidence="1">GluRS</shortName>
    </alternativeName>
</protein>
<evidence type="ECO:0000255" key="1">
    <source>
        <dbReference type="HAMAP-Rule" id="MF_00022"/>
    </source>
</evidence>
<proteinExistence type="inferred from homology"/>
<feature type="chain" id="PRO_0000237403" description="Glutamate--tRNA ligase">
    <location>
        <begin position="1"/>
        <end position="484"/>
    </location>
</feature>
<feature type="short sequence motif" description="'HIGH' region" evidence="1">
    <location>
        <begin position="11"/>
        <end position="21"/>
    </location>
</feature>
<feature type="short sequence motif" description="'KMSKS' region" evidence="1">
    <location>
        <begin position="252"/>
        <end position="256"/>
    </location>
</feature>
<feature type="binding site" evidence="1">
    <location>
        <position position="255"/>
    </location>
    <ligand>
        <name>ATP</name>
        <dbReference type="ChEBI" id="CHEBI:30616"/>
    </ligand>
</feature>
<name>SYE_STAAB</name>
<gene>
    <name evidence="1" type="primary">gltX</name>
    <name type="ordered locus">SAB0478</name>
</gene>
<dbReference type="EC" id="6.1.1.17" evidence="1"/>
<dbReference type="EMBL" id="AJ938182">
    <property type="protein sequence ID" value="CAI80166.1"/>
    <property type="molecule type" value="Genomic_DNA"/>
</dbReference>
<dbReference type="RefSeq" id="WP_001283799.1">
    <property type="nucleotide sequence ID" value="NC_007622.1"/>
</dbReference>
<dbReference type="SMR" id="Q2YSD3"/>
<dbReference type="KEGG" id="sab:SAB0478"/>
<dbReference type="HOGENOM" id="CLU_015768_6_1_9"/>
<dbReference type="GO" id="GO:0005829">
    <property type="term" value="C:cytosol"/>
    <property type="evidence" value="ECO:0007669"/>
    <property type="project" value="TreeGrafter"/>
</dbReference>
<dbReference type="GO" id="GO:0005524">
    <property type="term" value="F:ATP binding"/>
    <property type="evidence" value="ECO:0007669"/>
    <property type="project" value="UniProtKB-UniRule"/>
</dbReference>
<dbReference type="GO" id="GO:0004818">
    <property type="term" value="F:glutamate-tRNA ligase activity"/>
    <property type="evidence" value="ECO:0007669"/>
    <property type="project" value="UniProtKB-UniRule"/>
</dbReference>
<dbReference type="GO" id="GO:0000049">
    <property type="term" value="F:tRNA binding"/>
    <property type="evidence" value="ECO:0007669"/>
    <property type="project" value="InterPro"/>
</dbReference>
<dbReference type="GO" id="GO:0008270">
    <property type="term" value="F:zinc ion binding"/>
    <property type="evidence" value="ECO:0007669"/>
    <property type="project" value="InterPro"/>
</dbReference>
<dbReference type="GO" id="GO:0006424">
    <property type="term" value="P:glutamyl-tRNA aminoacylation"/>
    <property type="evidence" value="ECO:0007669"/>
    <property type="project" value="UniProtKB-UniRule"/>
</dbReference>
<dbReference type="CDD" id="cd00808">
    <property type="entry name" value="GluRS_core"/>
    <property type="match status" value="1"/>
</dbReference>
<dbReference type="FunFam" id="1.10.10.350:FF:000002">
    <property type="entry name" value="Glutamate--tRNA ligase"/>
    <property type="match status" value="1"/>
</dbReference>
<dbReference type="FunFam" id="3.40.50.620:FF:000007">
    <property type="entry name" value="Glutamate--tRNA ligase"/>
    <property type="match status" value="1"/>
</dbReference>
<dbReference type="Gene3D" id="1.10.10.350">
    <property type="match status" value="1"/>
</dbReference>
<dbReference type="Gene3D" id="3.40.50.620">
    <property type="entry name" value="HUPs"/>
    <property type="match status" value="1"/>
</dbReference>
<dbReference type="HAMAP" id="MF_00022">
    <property type="entry name" value="Glu_tRNA_synth_type1"/>
    <property type="match status" value="1"/>
</dbReference>
<dbReference type="InterPro" id="IPR045462">
    <property type="entry name" value="aa-tRNA-synth_I_cd-bd"/>
</dbReference>
<dbReference type="InterPro" id="IPR020751">
    <property type="entry name" value="aa-tRNA-synth_I_codon-bd_sub2"/>
</dbReference>
<dbReference type="InterPro" id="IPR001412">
    <property type="entry name" value="aa-tRNA-synth_I_CS"/>
</dbReference>
<dbReference type="InterPro" id="IPR008925">
    <property type="entry name" value="aa_tRNA-synth_I_cd-bd_sf"/>
</dbReference>
<dbReference type="InterPro" id="IPR004527">
    <property type="entry name" value="Glu-tRNA-ligase_bac/mito"/>
</dbReference>
<dbReference type="InterPro" id="IPR000924">
    <property type="entry name" value="Glu/Gln-tRNA-synth"/>
</dbReference>
<dbReference type="InterPro" id="IPR020058">
    <property type="entry name" value="Glu/Gln-tRNA-synth_Ib_cat-dom"/>
</dbReference>
<dbReference type="InterPro" id="IPR049940">
    <property type="entry name" value="GluQ/Sye"/>
</dbReference>
<dbReference type="InterPro" id="IPR033910">
    <property type="entry name" value="GluRS_core"/>
</dbReference>
<dbReference type="InterPro" id="IPR014729">
    <property type="entry name" value="Rossmann-like_a/b/a_fold"/>
</dbReference>
<dbReference type="NCBIfam" id="TIGR00464">
    <property type="entry name" value="gltX_bact"/>
    <property type="match status" value="1"/>
</dbReference>
<dbReference type="PANTHER" id="PTHR43311">
    <property type="entry name" value="GLUTAMATE--TRNA LIGASE"/>
    <property type="match status" value="1"/>
</dbReference>
<dbReference type="PANTHER" id="PTHR43311:SF2">
    <property type="entry name" value="GLUTAMATE--TRNA LIGASE, MITOCHONDRIAL-RELATED"/>
    <property type="match status" value="1"/>
</dbReference>
<dbReference type="Pfam" id="PF19269">
    <property type="entry name" value="Anticodon_2"/>
    <property type="match status" value="1"/>
</dbReference>
<dbReference type="Pfam" id="PF00749">
    <property type="entry name" value="tRNA-synt_1c"/>
    <property type="match status" value="1"/>
</dbReference>
<dbReference type="PRINTS" id="PR00987">
    <property type="entry name" value="TRNASYNTHGLU"/>
</dbReference>
<dbReference type="SUPFAM" id="SSF48163">
    <property type="entry name" value="An anticodon-binding domain of class I aminoacyl-tRNA synthetases"/>
    <property type="match status" value="1"/>
</dbReference>
<dbReference type="SUPFAM" id="SSF52374">
    <property type="entry name" value="Nucleotidylyl transferase"/>
    <property type="match status" value="1"/>
</dbReference>
<dbReference type="PROSITE" id="PS00178">
    <property type="entry name" value="AA_TRNA_LIGASE_I"/>
    <property type="match status" value="1"/>
</dbReference>